<proteinExistence type="inferred from homology"/>
<reference key="1">
    <citation type="journal article" date="2009" name="Infect. Immun.">
        <title>Comparative genomics reveal extensive transposon-mediated genomic plasticity and diversity among potential effector proteins within the genus Coxiella.</title>
        <authorList>
            <person name="Beare P.A."/>
            <person name="Unsworth N."/>
            <person name="Andoh M."/>
            <person name="Voth D.E."/>
            <person name="Omsland A."/>
            <person name="Gilk S.D."/>
            <person name="Williams K.P."/>
            <person name="Sobral B.W."/>
            <person name="Kupko J.J. III"/>
            <person name="Porcella S.F."/>
            <person name="Samuel J.E."/>
            <person name="Heinzen R.A."/>
        </authorList>
    </citation>
    <scope>NUCLEOTIDE SEQUENCE [LARGE SCALE GENOMIC DNA]</scope>
    <source>
        <strain>Dugway 5J108-111</strain>
    </source>
</reference>
<name>RS2_COXBN</name>
<organism>
    <name type="scientific">Coxiella burnetii (strain Dugway 5J108-111)</name>
    <dbReference type="NCBI Taxonomy" id="434922"/>
    <lineage>
        <taxon>Bacteria</taxon>
        <taxon>Pseudomonadati</taxon>
        <taxon>Pseudomonadota</taxon>
        <taxon>Gammaproteobacteria</taxon>
        <taxon>Legionellales</taxon>
        <taxon>Coxiellaceae</taxon>
        <taxon>Coxiella</taxon>
    </lineage>
</organism>
<sequence>MTDITMRQLLEAGVHFGHQTRYWNPKMAPYIYGARQKIHIINLEETLPAFRDALKFVKEVASKRGKVLFVGTKFAAREIVKEEATRCGMPYVDYRWLGGMLTNYKTIRQSIKRLKELEERLENEENLVGMTKKEILNLMREKEKLSANLAGIKNMGSLPDVLFVIDVEHERNAVQEANRLGITVLGIVDTNASPDNIDHVIPGNDDAIRAIRLYCKAIADTIIDARSVLELQKDEEAKEEKTKAKTTAKKVVTKKAKVAEKAQAAAEKKSEKPTTEKRPTKEAAETKETSEEPKTKEVQQPIEASKAEAEEGK</sequence>
<dbReference type="EMBL" id="CP000733">
    <property type="protein sequence ID" value="ABS78321.2"/>
    <property type="status" value="ALT_INIT"/>
    <property type="molecule type" value="Genomic_DNA"/>
</dbReference>
<dbReference type="RefSeq" id="WP_012220631.1">
    <property type="nucleotide sequence ID" value="NC_009727.1"/>
</dbReference>
<dbReference type="SMR" id="A9KBR3"/>
<dbReference type="KEGG" id="cbd:CBUD_0608"/>
<dbReference type="HOGENOM" id="CLU_040318_2_0_6"/>
<dbReference type="Proteomes" id="UP000008555">
    <property type="component" value="Chromosome"/>
</dbReference>
<dbReference type="GO" id="GO:0022627">
    <property type="term" value="C:cytosolic small ribosomal subunit"/>
    <property type="evidence" value="ECO:0007669"/>
    <property type="project" value="TreeGrafter"/>
</dbReference>
<dbReference type="GO" id="GO:0003735">
    <property type="term" value="F:structural constituent of ribosome"/>
    <property type="evidence" value="ECO:0007669"/>
    <property type="project" value="InterPro"/>
</dbReference>
<dbReference type="GO" id="GO:0006412">
    <property type="term" value="P:translation"/>
    <property type="evidence" value="ECO:0007669"/>
    <property type="project" value="UniProtKB-UniRule"/>
</dbReference>
<dbReference type="CDD" id="cd01425">
    <property type="entry name" value="RPS2"/>
    <property type="match status" value="1"/>
</dbReference>
<dbReference type="Gene3D" id="3.40.50.10490">
    <property type="entry name" value="Glucose-6-phosphate isomerase like protein, domain 1"/>
    <property type="match status" value="1"/>
</dbReference>
<dbReference type="Gene3D" id="1.10.287.610">
    <property type="entry name" value="Helix hairpin bin"/>
    <property type="match status" value="1"/>
</dbReference>
<dbReference type="HAMAP" id="MF_00291_B">
    <property type="entry name" value="Ribosomal_uS2_B"/>
    <property type="match status" value="1"/>
</dbReference>
<dbReference type="InterPro" id="IPR001865">
    <property type="entry name" value="Ribosomal_uS2"/>
</dbReference>
<dbReference type="InterPro" id="IPR005706">
    <property type="entry name" value="Ribosomal_uS2_bac/mit/plastid"/>
</dbReference>
<dbReference type="InterPro" id="IPR018130">
    <property type="entry name" value="Ribosomal_uS2_CS"/>
</dbReference>
<dbReference type="InterPro" id="IPR023591">
    <property type="entry name" value="Ribosomal_uS2_flav_dom_sf"/>
</dbReference>
<dbReference type="NCBIfam" id="TIGR01011">
    <property type="entry name" value="rpsB_bact"/>
    <property type="match status" value="1"/>
</dbReference>
<dbReference type="PANTHER" id="PTHR12534">
    <property type="entry name" value="30S RIBOSOMAL PROTEIN S2 PROKARYOTIC AND ORGANELLAR"/>
    <property type="match status" value="1"/>
</dbReference>
<dbReference type="PANTHER" id="PTHR12534:SF0">
    <property type="entry name" value="SMALL RIBOSOMAL SUBUNIT PROTEIN US2M"/>
    <property type="match status" value="1"/>
</dbReference>
<dbReference type="Pfam" id="PF00318">
    <property type="entry name" value="Ribosomal_S2"/>
    <property type="match status" value="1"/>
</dbReference>
<dbReference type="PRINTS" id="PR00395">
    <property type="entry name" value="RIBOSOMALS2"/>
</dbReference>
<dbReference type="SUPFAM" id="SSF52313">
    <property type="entry name" value="Ribosomal protein S2"/>
    <property type="match status" value="1"/>
</dbReference>
<dbReference type="PROSITE" id="PS00962">
    <property type="entry name" value="RIBOSOMAL_S2_1"/>
    <property type="match status" value="1"/>
</dbReference>
<gene>
    <name evidence="1" type="primary">rpsB</name>
    <name type="ordered locus">CBUD_0608</name>
</gene>
<feature type="chain" id="PRO_1000078876" description="Small ribosomal subunit protein uS2">
    <location>
        <begin position="1"/>
        <end position="313"/>
    </location>
</feature>
<feature type="region of interest" description="Disordered" evidence="2">
    <location>
        <begin position="234"/>
        <end position="313"/>
    </location>
</feature>
<feature type="compositionally biased region" description="Basic and acidic residues" evidence="2">
    <location>
        <begin position="234"/>
        <end position="243"/>
    </location>
</feature>
<feature type="compositionally biased region" description="Basic residues" evidence="2">
    <location>
        <begin position="244"/>
        <end position="256"/>
    </location>
</feature>
<feature type="compositionally biased region" description="Basic and acidic residues" evidence="2">
    <location>
        <begin position="266"/>
        <end position="297"/>
    </location>
</feature>
<evidence type="ECO:0000255" key="1">
    <source>
        <dbReference type="HAMAP-Rule" id="MF_00291"/>
    </source>
</evidence>
<evidence type="ECO:0000256" key="2">
    <source>
        <dbReference type="SAM" id="MobiDB-lite"/>
    </source>
</evidence>
<evidence type="ECO:0000305" key="3"/>
<comment type="similarity">
    <text evidence="1">Belongs to the universal ribosomal protein uS2 family.</text>
</comment>
<comment type="sequence caution" evidence="3">
    <conflict type="erroneous initiation">
        <sequence resource="EMBL-CDS" id="ABS78321"/>
    </conflict>
</comment>
<accession>A9KBR3</accession>
<protein>
    <recommendedName>
        <fullName evidence="1">Small ribosomal subunit protein uS2</fullName>
    </recommendedName>
    <alternativeName>
        <fullName evidence="3">30S ribosomal protein S2</fullName>
    </alternativeName>
</protein>
<keyword id="KW-0687">Ribonucleoprotein</keyword>
<keyword id="KW-0689">Ribosomal protein</keyword>